<sequence>MAEFEDQLVFNSISARALKAYFTAKINEMVDELVTRKCPQKKKSQAKKPEVRIPVDLVKSSFVKKFGLCNYGGILISLINSLVENNFFTKNGKLDDTGKKELVLTDVEKRILNTIDKSSPLYIDISDVKVLAARLKRSATQFNFNGHTYHLENDKIEDLINQLVKDESIQLDEKSSIKDSMYVIPDELIDVLKTRLFRSPQVKDNIISRTRLYDYFTRVTKRDESSIYVILKDPRIASILSLETVKMGAFMYTKHSMLTNAISSRVDRYSKKFQESFYEDIAEFVKENERVNVSRVVECLTVPNITISSNTE</sequence>
<feature type="chain" id="PRO_0000457676" description="Telomere-binding protein OPG077">
    <location>
        <begin position="1"/>
        <end position="312"/>
    </location>
</feature>
<gene>
    <name type="primary">OPG077</name>
    <name type="ORF">MPXVgp062</name>
</gene>
<organism>
    <name type="scientific">Monkeypox virus</name>
    <dbReference type="NCBI Taxonomy" id="10244"/>
    <lineage>
        <taxon>Viruses</taxon>
        <taxon>Varidnaviria</taxon>
        <taxon>Bamfordvirae</taxon>
        <taxon>Nucleocytoviricota</taxon>
        <taxon>Pokkesviricetes</taxon>
        <taxon>Chitovirales</taxon>
        <taxon>Poxviridae</taxon>
        <taxon>Chordopoxvirinae</taxon>
        <taxon>Orthopoxvirus</taxon>
    </lineage>
</organism>
<name>PG077_MONPV</name>
<organismHost>
    <name type="scientific">Cynomys gunnisoni</name>
    <name type="common">Gunnison's prairie dog</name>
    <name type="synonym">Spermophilus gunnisoni</name>
    <dbReference type="NCBI Taxonomy" id="45479"/>
</organismHost>
<organismHost>
    <name type="scientific">Cynomys leucurus</name>
    <name type="common">White-tailed prairie dog</name>
    <dbReference type="NCBI Taxonomy" id="99825"/>
</organismHost>
<organismHost>
    <name type="scientific">Cynomys ludovicianus</name>
    <name type="common">Black-tailed prairie dog</name>
    <dbReference type="NCBI Taxonomy" id="45480"/>
</organismHost>
<organismHost>
    <name type="scientific">Cynomys mexicanus</name>
    <name type="common">Mexican prairie dog</name>
    <dbReference type="NCBI Taxonomy" id="99826"/>
</organismHost>
<organismHost>
    <name type="scientific">Cynomys parvidens</name>
    <name type="common">Utah prairie dog</name>
    <dbReference type="NCBI Taxonomy" id="99827"/>
</organismHost>
<organismHost>
    <name type="scientific">Gliridae</name>
    <name type="common">dormice</name>
    <dbReference type="NCBI Taxonomy" id="30650"/>
</organismHost>
<organismHost>
    <name type="scientific">Heliosciurus ruwenzorii</name>
    <name type="common">Ruwenzori sun squirrel</name>
    <dbReference type="NCBI Taxonomy" id="226685"/>
</organismHost>
<organismHost>
    <name type="scientific">Homo sapiens</name>
    <name type="common">Human</name>
    <dbReference type="NCBI Taxonomy" id="9606"/>
</organismHost>
<organismHost>
    <name type="scientific">Mus musculus</name>
    <name type="common">Mouse</name>
    <dbReference type="NCBI Taxonomy" id="10090"/>
</organismHost>
<evidence type="ECO:0000250" key="1">
    <source>
        <dbReference type="UniProtKB" id="P16714"/>
    </source>
</evidence>
<evidence type="ECO:0000305" key="2"/>
<comment type="function">
    <text evidence="1">DNA-binding protein which binds to the hairpin form of the viral telomeric sequence. Required for the production of mature virions (MV).</text>
</comment>
<comment type="subcellular location">
    <subcellularLocation>
        <location evidence="1">Virion</location>
    </subcellularLocation>
    <text evidence="1">Present in the virus core.</text>
</comment>
<comment type="miscellaneous">
    <text evidence="1">Each virion contains approximately 670 molecules of OPG077.</text>
</comment>
<comment type="similarity">
    <text evidence="2">Belongs to the orthopoxvirus OPG077 family.</text>
</comment>
<dbReference type="EMBL" id="KC257461">
    <property type="protein sequence ID" value="AGF36966.1"/>
    <property type="molecule type" value="Genomic_DNA"/>
</dbReference>
<dbReference type="EMBL" id="MT903340">
    <property type="protein sequence ID" value="QNP12932.1"/>
    <property type="molecule type" value="Genomic_DNA"/>
</dbReference>
<dbReference type="RefSeq" id="NP_536489.1">
    <property type="nucleotide sequence ID" value="NC_003310.1"/>
</dbReference>
<dbReference type="RefSeq" id="YP_010377059.1">
    <property type="nucleotide sequence ID" value="NC_063383.1"/>
</dbReference>
<dbReference type="SMR" id="A0A7H0DN49"/>
<dbReference type="GeneID" id="72551472"/>
<dbReference type="GeneID" id="929042"/>
<dbReference type="KEGG" id="vg:929042"/>
<dbReference type="Proteomes" id="UP000516359">
    <property type="component" value="Genome"/>
</dbReference>
<dbReference type="GO" id="GO:0044423">
    <property type="term" value="C:virion component"/>
    <property type="evidence" value="ECO:0007669"/>
    <property type="project" value="UniProtKB-KW"/>
</dbReference>
<dbReference type="GO" id="GO:0003677">
    <property type="term" value="F:DNA binding"/>
    <property type="evidence" value="ECO:0007669"/>
    <property type="project" value="UniProtKB-KW"/>
</dbReference>
<dbReference type="InterPro" id="IPR004969">
    <property type="entry name" value="Poxvirus_I1"/>
</dbReference>
<dbReference type="Pfam" id="PF03289">
    <property type="entry name" value="Pox_I1"/>
    <property type="match status" value="1"/>
</dbReference>
<dbReference type="PIRSF" id="PIRSF015625">
    <property type="entry name" value="VAC_I1L"/>
    <property type="match status" value="1"/>
</dbReference>
<reference key="1">
    <citation type="journal article" date="2013" name="Am. J. Trop. Med. Hyg.">
        <title>Detection of human monkeypox in the republic of the congo following intensive community education.</title>
        <authorList>
            <person name="Reynolds M.G."/>
            <person name="Emerson G.L."/>
            <person name="Pukuta E."/>
            <person name="Karhemere S."/>
            <person name="Muyembe J.J."/>
            <person name="Bikindou A."/>
            <person name="McCollum A.M."/>
            <person name="Moses C."/>
            <person name="Wilkins K."/>
            <person name="Zhao H."/>
            <person name="Damon I.K."/>
            <person name="Karem K.L."/>
            <person name="Li Y."/>
            <person name="Carroll D.S."/>
            <person name="Mombouli J.V."/>
        </authorList>
    </citation>
    <scope>NUCLEOTIDE SEQUENCE</scope>
    <source>
        <strain>ROC2010</strain>
    </source>
</reference>
<reference key="2">
    <citation type="journal article" date="2022" name="J. Infect. Dis.">
        <title>Exportation of Monkeypox virus from the African continent.</title>
        <authorList>
            <person name="Mauldin M.R."/>
            <person name="McCollum A.M."/>
            <person name="Nakazawa Y.J."/>
            <person name="Mandra A."/>
            <person name="Whitehouse E.R."/>
            <person name="Davidson W."/>
            <person name="Zhao H."/>
            <person name="Gao J."/>
            <person name="Li Y."/>
            <person name="Doty J."/>
            <person name="Yinka-Ogunleye A."/>
            <person name="Akinpelu A."/>
            <person name="Aruna O."/>
            <person name="Naidoo D."/>
            <person name="Lewandowski K."/>
            <person name="Afrough B."/>
            <person name="Graham V."/>
            <person name="Aarons E."/>
            <person name="Hewson R."/>
            <person name="Vipond R."/>
            <person name="Dunning J."/>
            <person name="Chand M."/>
            <person name="Brown C."/>
            <person name="Cohen-Gihon I."/>
            <person name="Erez N."/>
            <person name="Shifman O."/>
            <person name="Israeli O."/>
            <person name="Sharon M."/>
            <person name="Schwartz E."/>
            <person name="Beth-Din A."/>
            <person name="Zvi A."/>
            <person name="Mak T.M."/>
            <person name="Ng Y.K."/>
            <person name="Cui L."/>
            <person name="Lin R.T.P."/>
            <person name="Olson V.A."/>
            <person name="Brooks T."/>
            <person name="Paran N."/>
            <person name="Ihekweazu C."/>
            <person name="Reynolds M.G."/>
        </authorList>
    </citation>
    <scope>NUCLEOTIDE SEQUENCE [LARGE SCALE GENOMIC DNA]</scope>
    <source>
        <strain>MPXV-M5312_HM12_Rivers</strain>
    </source>
</reference>
<keyword id="KW-0238">DNA-binding</keyword>
<keyword id="KW-1185">Reference proteome</keyword>
<keyword id="KW-0946">Virion</keyword>
<protein>
    <recommendedName>
        <fullName>Telomere-binding protein OPG077</fullName>
    </recommendedName>
    <alternativeName>
        <fullName>Telomere-binding protein I1</fullName>
    </alternativeName>
</protein>
<accession>A0A7H0DN49</accession>
<proteinExistence type="inferred from homology"/>